<proteinExistence type="inferred from homology"/>
<organism>
    <name type="scientific">Haloquadratum walsbyi (strain DSM 16790 / HBSQ001)</name>
    <dbReference type="NCBI Taxonomy" id="362976"/>
    <lineage>
        <taxon>Archaea</taxon>
        <taxon>Methanobacteriati</taxon>
        <taxon>Methanobacteriota</taxon>
        <taxon>Stenosarchaea group</taxon>
        <taxon>Halobacteria</taxon>
        <taxon>Halobacteriales</taxon>
        <taxon>Haloferacaceae</taxon>
        <taxon>Haloquadratum</taxon>
    </lineage>
</organism>
<evidence type="ECO:0000255" key="1">
    <source>
        <dbReference type="HAMAP-Rule" id="MF_00547"/>
    </source>
</evidence>
<evidence type="ECO:0000305" key="2"/>
<protein>
    <recommendedName>
        <fullName evidence="1">Large ribosomal subunit protein eL37</fullName>
    </recommendedName>
    <alternativeName>
        <fullName evidence="2">50S ribosomal protein L37e</fullName>
    </alternativeName>
</protein>
<name>RL37_HALWD</name>
<keyword id="KW-0479">Metal-binding</keyword>
<keyword id="KW-1185">Reference proteome</keyword>
<keyword id="KW-0687">Ribonucleoprotein</keyword>
<keyword id="KW-0689">Ribosomal protein</keyword>
<keyword id="KW-0694">RNA-binding</keyword>
<keyword id="KW-0699">rRNA-binding</keyword>
<keyword id="KW-0862">Zinc</keyword>
<keyword id="KW-0863">Zinc-finger</keyword>
<feature type="chain" id="PRO_1000017757" description="Large ribosomal subunit protein eL37">
    <location>
        <begin position="1"/>
        <end position="58"/>
    </location>
</feature>
<feature type="zinc finger region" description="C4-type" evidence="1">
    <location>
        <begin position="20"/>
        <end position="38"/>
    </location>
</feature>
<feature type="binding site" evidence="1">
    <location>
        <position position="20"/>
    </location>
    <ligand>
        <name>Zn(2+)</name>
        <dbReference type="ChEBI" id="CHEBI:29105"/>
    </ligand>
</feature>
<feature type="binding site" evidence="1">
    <location>
        <position position="23"/>
    </location>
    <ligand>
        <name>Zn(2+)</name>
        <dbReference type="ChEBI" id="CHEBI:29105"/>
    </ligand>
</feature>
<feature type="binding site" evidence="1">
    <location>
        <position position="35"/>
    </location>
    <ligand>
        <name>Zn(2+)</name>
        <dbReference type="ChEBI" id="CHEBI:29105"/>
    </ligand>
</feature>
<feature type="binding site" evidence="1">
    <location>
        <position position="38"/>
    </location>
    <ligand>
        <name>Zn(2+)</name>
        <dbReference type="ChEBI" id="CHEBI:29105"/>
    </ligand>
</feature>
<dbReference type="EMBL" id="AM180088">
    <property type="protein sequence ID" value="CAJ52999.1"/>
    <property type="molecule type" value="Genomic_DNA"/>
</dbReference>
<dbReference type="RefSeq" id="WP_011572110.1">
    <property type="nucleotide sequence ID" value="NC_008212.1"/>
</dbReference>
<dbReference type="SMR" id="Q18GA1"/>
<dbReference type="STRING" id="362976.HQ_2892A"/>
<dbReference type="KEGG" id="hwa:HQ_2892A"/>
<dbReference type="eggNOG" id="arCOG04126">
    <property type="taxonomic scope" value="Archaea"/>
</dbReference>
<dbReference type="HOGENOM" id="CLU_208825_0_0_2"/>
<dbReference type="Proteomes" id="UP000001975">
    <property type="component" value="Chromosome"/>
</dbReference>
<dbReference type="GO" id="GO:0022625">
    <property type="term" value="C:cytosolic large ribosomal subunit"/>
    <property type="evidence" value="ECO:0007669"/>
    <property type="project" value="TreeGrafter"/>
</dbReference>
<dbReference type="GO" id="GO:0019843">
    <property type="term" value="F:rRNA binding"/>
    <property type="evidence" value="ECO:0007669"/>
    <property type="project" value="UniProtKB-KW"/>
</dbReference>
<dbReference type="GO" id="GO:0003735">
    <property type="term" value="F:structural constituent of ribosome"/>
    <property type="evidence" value="ECO:0007669"/>
    <property type="project" value="InterPro"/>
</dbReference>
<dbReference type="GO" id="GO:0008270">
    <property type="term" value="F:zinc ion binding"/>
    <property type="evidence" value="ECO:0007669"/>
    <property type="project" value="UniProtKB-UniRule"/>
</dbReference>
<dbReference type="GO" id="GO:0006412">
    <property type="term" value="P:translation"/>
    <property type="evidence" value="ECO:0007669"/>
    <property type="project" value="UniProtKB-UniRule"/>
</dbReference>
<dbReference type="FunFam" id="2.20.25.30:FF:000003">
    <property type="entry name" value="50S ribosomal protein L37e"/>
    <property type="match status" value="1"/>
</dbReference>
<dbReference type="Gene3D" id="2.20.25.30">
    <property type="match status" value="1"/>
</dbReference>
<dbReference type="HAMAP" id="MF_00547">
    <property type="entry name" value="Ribosomal_eL37"/>
    <property type="match status" value="1"/>
</dbReference>
<dbReference type="InterPro" id="IPR001569">
    <property type="entry name" value="Ribosomal_eL37"/>
</dbReference>
<dbReference type="InterPro" id="IPR011331">
    <property type="entry name" value="Ribosomal_eL37/eL43"/>
</dbReference>
<dbReference type="InterPro" id="IPR018267">
    <property type="entry name" value="Ribosomal_eL37_CS"/>
</dbReference>
<dbReference type="InterPro" id="IPR011332">
    <property type="entry name" value="Ribosomal_zn-bd"/>
</dbReference>
<dbReference type="NCBIfam" id="NF003214">
    <property type="entry name" value="PRK04179.1"/>
    <property type="match status" value="1"/>
</dbReference>
<dbReference type="PANTHER" id="PTHR10768">
    <property type="entry name" value="60S RIBOSOMAL PROTEIN L37"/>
    <property type="match status" value="1"/>
</dbReference>
<dbReference type="PANTHER" id="PTHR10768:SF0">
    <property type="entry name" value="RIBOSOMAL PROTEIN L37"/>
    <property type="match status" value="1"/>
</dbReference>
<dbReference type="Pfam" id="PF01907">
    <property type="entry name" value="Ribosomal_L37e"/>
    <property type="match status" value="1"/>
</dbReference>
<dbReference type="SUPFAM" id="SSF57829">
    <property type="entry name" value="Zn-binding ribosomal proteins"/>
    <property type="match status" value="1"/>
</dbReference>
<dbReference type="PROSITE" id="PS01077">
    <property type="entry name" value="RIBOSOMAL_L37E"/>
    <property type="match status" value="1"/>
</dbReference>
<comment type="function">
    <text evidence="1">Binds to the 23S rRNA.</text>
</comment>
<comment type="cofactor">
    <cofactor evidence="1">
        <name>Zn(2+)</name>
        <dbReference type="ChEBI" id="CHEBI:29105"/>
    </cofactor>
    <text evidence="1">Binds 1 zinc ion per subunit.</text>
</comment>
<comment type="similarity">
    <text evidence="1">Belongs to the eukaryotic ribosomal protein eL37 family.</text>
</comment>
<sequence length="58" mass="6401">MTGAGTPSQGKKNTTTHVKCRRCGEKSYHTKKKVCSSCGFGKSAKRRDYEWSSKTGDN</sequence>
<gene>
    <name evidence="1" type="primary">rpl37e</name>
    <name type="ordered locus">HQ_2892A</name>
</gene>
<reference key="1">
    <citation type="journal article" date="2006" name="BMC Genomics">
        <title>The genome of the square archaeon Haloquadratum walsbyi: life at the limits of water activity.</title>
        <authorList>
            <person name="Bolhuis H."/>
            <person name="Palm P."/>
            <person name="Wende A."/>
            <person name="Falb M."/>
            <person name="Rampp M."/>
            <person name="Rodriguez-Valera F."/>
            <person name="Pfeiffer F."/>
            <person name="Oesterhelt D."/>
        </authorList>
    </citation>
    <scope>NUCLEOTIDE SEQUENCE [LARGE SCALE GENOMIC DNA]</scope>
    <source>
        <strain>DSM 16790 / HBSQ001</strain>
    </source>
</reference>
<accession>Q18GA1</accession>